<reference key="1">
    <citation type="journal article" date="2005" name="Science">
        <title>The transcriptional landscape of the mammalian genome.</title>
        <authorList>
            <person name="Carninci P."/>
            <person name="Kasukawa T."/>
            <person name="Katayama S."/>
            <person name="Gough J."/>
            <person name="Frith M.C."/>
            <person name="Maeda N."/>
            <person name="Oyama R."/>
            <person name="Ravasi T."/>
            <person name="Lenhard B."/>
            <person name="Wells C."/>
            <person name="Kodzius R."/>
            <person name="Shimokawa K."/>
            <person name="Bajic V.B."/>
            <person name="Brenner S.E."/>
            <person name="Batalov S."/>
            <person name="Forrest A.R."/>
            <person name="Zavolan M."/>
            <person name="Davis M.J."/>
            <person name="Wilming L.G."/>
            <person name="Aidinis V."/>
            <person name="Allen J.E."/>
            <person name="Ambesi-Impiombato A."/>
            <person name="Apweiler R."/>
            <person name="Aturaliya R.N."/>
            <person name="Bailey T.L."/>
            <person name="Bansal M."/>
            <person name="Baxter L."/>
            <person name="Beisel K.W."/>
            <person name="Bersano T."/>
            <person name="Bono H."/>
            <person name="Chalk A.M."/>
            <person name="Chiu K.P."/>
            <person name="Choudhary V."/>
            <person name="Christoffels A."/>
            <person name="Clutterbuck D.R."/>
            <person name="Crowe M.L."/>
            <person name="Dalla E."/>
            <person name="Dalrymple B.P."/>
            <person name="de Bono B."/>
            <person name="Della Gatta G."/>
            <person name="di Bernardo D."/>
            <person name="Down T."/>
            <person name="Engstrom P."/>
            <person name="Fagiolini M."/>
            <person name="Faulkner G."/>
            <person name="Fletcher C.F."/>
            <person name="Fukushima T."/>
            <person name="Furuno M."/>
            <person name="Futaki S."/>
            <person name="Gariboldi M."/>
            <person name="Georgii-Hemming P."/>
            <person name="Gingeras T.R."/>
            <person name="Gojobori T."/>
            <person name="Green R.E."/>
            <person name="Gustincich S."/>
            <person name="Harbers M."/>
            <person name="Hayashi Y."/>
            <person name="Hensch T.K."/>
            <person name="Hirokawa N."/>
            <person name="Hill D."/>
            <person name="Huminiecki L."/>
            <person name="Iacono M."/>
            <person name="Ikeo K."/>
            <person name="Iwama A."/>
            <person name="Ishikawa T."/>
            <person name="Jakt M."/>
            <person name="Kanapin A."/>
            <person name="Katoh M."/>
            <person name="Kawasawa Y."/>
            <person name="Kelso J."/>
            <person name="Kitamura H."/>
            <person name="Kitano H."/>
            <person name="Kollias G."/>
            <person name="Krishnan S.P."/>
            <person name="Kruger A."/>
            <person name="Kummerfeld S.K."/>
            <person name="Kurochkin I.V."/>
            <person name="Lareau L.F."/>
            <person name="Lazarevic D."/>
            <person name="Lipovich L."/>
            <person name="Liu J."/>
            <person name="Liuni S."/>
            <person name="McWilliam S."/>
            <person name="Madan Babu M."/>
            <person name="Madera M."/>
            <person name="Marchionni L."/>
            <person name="Matsuda H."/>
            <person name="Matsuzawa S."/>
            <person name="Miki H."/>
            <person name="Mignone F."/>
            <person name="Miyake S."/>
            <person name="Morris K."/>
            <person name="Mottagui-Tabar S."/>
            <person name="Mulder N."/>
            <person name="Nakano N."/>
            <person name="Nakauchi H."/>
            <person name="Ng P."/>
            <person name="Nilsson R."/>
            <person name="Nishiguchi S."/>
            <person name="Nishikawa S."/>
            <person name="Nori F."/>
            <person name="Ohara O."/>
            <person name="Okazaki Y."/>
            <person name="Orlando V."/>
            <person name="Pang K.C."/>
            <person name="Pavan W.J."/>
            <person name="Pavesi G."/>
            <person name="Pesole G."/>
            <person name="Petrovsky N."/>
            <person name="Piazza S."/>
            <person name="Reed J."/>
            <person name="Reid J.F."/>
            <person name="Ring B.Z."/>
            <person name="Ringwald M."/>
            <person name="Rost B."/>
            <person name="Ruan Y."/>
            <person name="Salzberg S.L."/>
            <person name="Sandelin A."/>
            <person name="Schneider C."/>
            <person name="Schoenbach C."/>
            <person name="Sekiguchi K."/>
            <person name="Semple C.A."/>
            <person name="Seno S."/>
            <person name="Sessa L."/>
            <person name="Sheng Y."/>
            <person name="Shibata Y."/>
            <person name="Shimada H."/>
            <person name="Shimada K."/>
            <person name="Silva D."/>
            <person name="Sinclair B."/>
            <person name="Sperling S."/>
            <person name="Stupka E."/>
            <person name="Sugiura K."/>
            <person name="Sultana R."/>
            <person name="Takenaka Y."/>
            <person name="Taki K."/>
            <person name="Tammoja K."/>
            <person name="Tan S.L."/>
            <person name="Tang S."/>
            <person name="Taylor M.S."/>
            <person name="Tegner J."/>
            <person name="Teichmann S.A."/>
            <person name="Ueda H.R."/>
            <person name="van Nimwegen E."/>
            <person name="Verardo R."/>
            <person name="Wei C.L."/>
            <person name="Yagi K."/>
            <person name="Yamanishi H."/>
            <person name="Zabarovsky E."/>
            <person name="Zhu S."/>
            <person name="Zimmer A."/>
            <person name="Hide W."/>
            <person name="Bult C."/>
            <person name="Grimmond S.M."/>
            <person name="Teasdale R.D."/>
            <person name="Liu E.T."/>
            <person name="Brusic V."/>
            <person name="Quackenbush J."/>
            <person name="Wahlestedt C."/>
            <person name="Mattick J.S."/>
            <person name="Hume D.A."/>
            <person name="Kai C."/>
            <person name="Sasaki D."/>
            <person name="Tomaru Y."/>
            <person name="Fukuda S."/>
            <person name="Kanamori-Katayama M."/>
            <person name="Suzuki M."/>
            <person name="Aoki J."/>
            <person name="Arakawa T."/>
            <person name="Iida J."/>
            <person name="Imamura K."/>
            <person name="Itoh M."/>
            <person name="Kato T."/>
            <person name="Kawaji H."/>
            <person name="Kawagashira N."/>
            <person name="Kawashima T."/>
            <person name="Kojima M."/>
            <person name="Kondo S."/>
            <person name="Konno H."/>
            <person name="Nakano K."/>
            <person name="Ninomiya N."/>
            <person name="Nishio T."/>
            <person name="Okada M."/>
            <person name="Plessy C."/>
            <person name="Shibata K."/>
            <person name="Shiraki T."/>
            <person name="Suzuki S."/>
            <person name="Tagami M."/>
            <person name="Waki K."/>
            <person name="Watahiki A."/>
            <person name="Okamura-Oho Y."/>
            <person name="Suzuki H."/>
            <person name="Kawai J."/>
            <person name="Hayashizaki Y."/>
        </authorList>
    </citation>
    <scope>NUCLEOTIDE SEQUENCE [LARGE SCALE MRNA]</scope>
    <source>
        <strain>C57BL/6J</strain>
        <strain>NOD</strain>
        <tissue>Brain</tissue>
        <tissue>Cerebellum</tissue>
        <tissue>Embryonic stem cell</tissue>
    </source>
</reference>
<reference key="2">
    <citation type="journal article" date="2004" name="Genome Res.">
        <title>The status, quality, and expansion of the NIH full-length cDNA project: the Mammalian Gene Collection (MGC).</title>
        <authorList>
            <consortium name="The MGC Project Team"/>
        </authorList>
    </citation>
    <scope>NUCLEOTIDE SEQUENCE [LARGE SCALE MRNA]</scope>
</reference>
<reference key="3">
    <citation type="journal article" date="2010" name="Cell">
        <title>A tissue-specific atlas of mouse protein phosphorylation and expression.</title>
        <authorList>
            <person name="Huttlin E.L."/>
            <person name="Jedrychowski M.P."/>
            <person name="Elias J.E."/>
            <person name="Goswami T."/>
            <person name="Rad R."/>
            <person name="Beausoleil S.A."/>
            <person name="Villen J."/>
            <person name="Haas W."/>
            <person name="Sowa M.E."/>
            <person name="Gygi S.P."/>
        </authorList>
    </citation>
    <scope>IDENTIFICATION BY MASS SPECTROMETRY [LARGE SCALE ANALYSIS]</scope>
    <source>
        <tissue>Brain</tissue>
    </source>
</reference>
<reference key="4">
    <citation type="journal article" date="2018" name="Nat. Cell Biol.">
        <title>TMEM9 promotes intestinal tumorigenesis through vacuolar-ATPase-activated Wnt/beta-catenin signalling.</title>
        <authorList>
            <person name="Jung Y.S."/>
            <person name="Jun S."/>
            <person name="Kim M.J."/>
            <person name="Lee S.H."/>
            <person name="Suh H.N."/>
            <person name="Lien E.M."/>
            <person name="Jung H.Y."/>
            <person name="Lee S."/>
            <person name="Zhang J."/>
            <person name="Yang J.I."/>
            <person name="Ji H."/>
            <person name="Wu J.Y."/>
            <person name="Wang W."/>
            <person name="Miller R.K."/>
            <person name="Chen J."/>
            <person name="McCrea P.D."/>
            <person name="Kopetz S."/>
            <person name="Park J.I."/>
        </authorList>
    </citation>
    <scope>TISSUE SPECIFICITY</scope>
    <scope>DISRUPTION PHENOTYPE</scope>
</reference>
<reference key="5">
    <citation type="journal article" date="2021" name="Hepatology">
        <title>TMEM9-v-ATPase Activates Wnt/beta-Catenin Signaling via APC Lysosomal Degradation for Liver Regeneration and Tumorigenesis.</title>
        <authorList>
            <person name="Jung Y.S."/>
            <person name="Stratton S.A."/>
            <person name="Lee S.H."/>
            <person name="Kim M.J."/>
            <person name="Jun S."/>
            <person name="Zhang J."/>
            <person name="Zheng B."/>
            <person name="Cervantes C.L."/>
            <person name="Cha J.H."/>
            <person name="Barton M.C."/>
            <person name="Park J.I."/>
        </authorList>
    </citation>
    <scope>FUNCTION</scope>
    <scope>TISSUE SPECIFICITY</scope>
    <scope>DISRUPTION PHENOTYPE</scope>
</reference>
<gene>
    <name evidence="8" type="primary">Tmem9</name>
</gene>
<organism>
    <name type="scientific">Mus musculus</name>
    <name type="common">Mouse</name>
    <dbReference type="NCBI Taxonomy" id="10090"/>
    <lineage>
        <taxon>Eukaryota</taxon>
        <taxon>Metazoa</taxon>
        <taxon>Chordata</taxon>
        <taxon>Craniata</taxon>
        <taxon>Vertebrata</taxon>
        <taxon>Euteleostomi</taxon>
        <taxon>Mammalia</taxon>
        <taxon>Eutheria</taxon>
        <taxon>Euarchontoglires</taxon>
        <taxon>Glires</taxon>
        <taxon>Rodentia</taxon>
        <taxon>Myomorpha</taxon>
        <taxon>Muroidea</taxon>
        <taxon>Muridae</taxon>
        <taxon>Murinae</taxon>
        <taxon>Mus</taxon>
        <taxon>Mus</taxon>
    </lineage>
</organism>
<accession>Q9CR23</accession>
<accession>Q3U459</accession>
<evidence type="ECO:0000250" key="1">
    <source>
        <dbReference type="UniProtKB" id="Q9P0T7"/>
    </source>
</evidence>
<evidence type="ECO:0000255" key="2"/>
<evidence type="ECO:0000269" key="3">
    <source>
    </source>
</evidence>
<evidence type="ECO:0000269" key="4">
    <source>
    </source>
</evidence>
<evidence type="ECO:0000303" key="5">
    <source>
    </source>
</evidence>
<evidence type="ECO:0000305" key="6"/>
<evidence type="ECO:0000305" key="7">
    <source>
    </source>
</evidence>
<evidence type="ECO:0000312" key="8">
    <source>
        <dbReference type="MGI" id="MGI:1913491"/>
    </source>
</evidence>
<protein>
    <recommendedName>
        <fullName evidence="7">Proton-transporting V-type ATPase complex assembly regulator TMEM9</fullName>
        <shortName evidence="7">v-ATPase assembly regulator TMEM9</shortName>
    </recommendedName>
    <alternativeName>
        <fullName evidence="5">Transmembrane protein 9</fullName>
        <shortName evidence="5">Protein TMEM9</shortName>
    </alternativeName>
</protein>
<proteinExistence type="evidence at protein level"/>
<feature type="signal peptide" evidence="2">
    <location>
        <begin position="1"/>
        <end position="20"/>
    </location>
</feature>
<feature type="chain" id="PRO_0000034375" description="Proton-transporting V-type ATPase complex assembly regulator TMEM9">
    <location>
        <begin position="21"/>
        <end position="183"/>
    </location>
</feature>
<feature type="topological domain" description="Extracellular" evidence="2">
    <location>
        <begin position="21"/>
        <end position="89"/>
    </location>
</feature>
<feature type="transmembrane region" description="Helical" evidence="2">
    <location>
        <begin position="90"/>
        <end position="110"/>
    </location>
</feature>
<feature type="topological domain" description="Cytoplasmic" evidence="2">
    <location>
        <begin position="111"/>
        <end position="183"/>
    </location>
</feature>
<feature type="modified residue" description="Phosphoserine" evidence="1">
    <location>
        <position position="144"/>
    </location>
</feature>
<feature type="glycosylation site" description="N-linked (GlcNAc...) asparagine" evidence="2">
    <location>
        <position position="21"/>
    </location>
</feature>
<feature type="glycosylation site" description="N-linked (GlcNAc...) asparagine" evidence="2">
    <location>
        <position position="38"/>
    </location>
</feature>
<feature type="glycosylation site" description="N-linked (GlcNAc...) asparagine" evidence="2">
    <location>
        <position position="47"/>
    </location>
</feature>
<comment type="function">
    <text evidence="1 3 4">Transmembrane protein that binds to and facilitates the assembly of lysosomal proton-transporting V-type ATPase (v-ATPase), resulting in enhanced lysosomal acidification and trafficking (By similarity). By bringing the v-ATPase accessory protein ATP6AP2 and the v-ATPase subunit ATP6V0D1 together, allows v-ATPase complex formation and activation (By similarity). TMEM9-controlled vesicular acidification induces hyperactivation of Wnt/beta-catenin signaling, involved in development, tissue homeostasis and tissue regeneration, through lysosomal degradation of adenomatous polyposis coli/APC (PubMed:30374053, PubMed:32380568). In the liver, involved in hepatic regeneration (PubMed:32380568).</text>
</comment>
<comment type="subunit">
    <text evidence="1">Interacts with the v-ATPase accessory protein ATP6AP2 and with the v-ATPase complex subunit ATP6V0D1; these interactions lead to the assembly of the v-ATPase complex.</text>
</comment>
<comment type="subcellular location">
    <subcellularLocation>
        <location evidence="1">Lysosome membrane</location>
        <topology evidence="2">Single-pass type I membrane protein</topology>
    </subcellularLocation>
    <subcellularLocation>
        <location evidence="1">Late endosome membrane</location>
        <topology evidence="2">Single-pass type I membrane protein</topology>
    </subcellularLocation>
    <subcellularLocation>
        <location evidence="1">Endosome</location>
        <location evidence="1">Multivesicular body membrane</location>
        <topology evidence="2">Single-pass type I membrane protein</topology>
    </subcellularLocation>
</comment>
<comment type="tissue specificity">
    <text evidence="3 4">Expressed in heart, lung, kidney, liver and intestines (PubMed:30374053). Enriched in the hepatocytes around the central vein (PubMed:32380568).</text>
</comment>
<comment type="domain">
    <text evidence="1">The transmembrane domain (TMD) is essential for the interaction with ATP6AP2.</text>
</comment>
<comment type="PTM">
    <text evidence="1">N-glycosylated.</text>
</comment>
<comment type="disruption phenotype">
    <text evidence="3 4">Knockout mice are viable and exhibit no discernible phenotypes in the overall liver architecture and hepatocytes (PubMed:30374053, PubMed:32380568). However, they display impaired hepatic regeneration with reduced Wnt signaling (PubMed:32380568). Knockout mice also show a suppression of intestinal tumorigenesis (PubMed:30374053).</text>
</comment>
<comment type="similarity">
    <text evidence="6">Belongs to the TMEM9 family.</text>
</comment>
<keyword id="KW-0967">Endosome</keyword>
<keyword id="KW-0325">Glycoprotein</keyword>
<keyword id="KW-0458">Lysosome</keyword>
<keyword id="KW-0472">Membrane</keyword>
<keyword id="KW-0597">Phosphoprotein</keyword>
<keyword id="KW-0653">Protein transport</keyword>
<keyword id="KW-1185">Reference proteome</keyword>
<keyword id="KW-0732">Signal</keyword>
<keyword id="KW-0812">Transmembrane</keyword>
<keyword id="KW-1133">Transmembrane helix</keyword>
<keyword id="KW-0813">Transport</keyword>
<name>TMEM9_MOUSE</name>
<sequence>MKLLCLVAVVGCLLVPPAQANKSSEDIRCKCICPPYRNISGHIYNQNVSQKDCNCLHVVEPMPVPGHDVEAYCLLCECRYEERSTTTIKVIIVIYLSVVGALLLYMAFLMLVDPLIRKPDAYTEQLHNEEENEDARTMATAAASIGGPRANTVLERVEGAQQRWKLQVQEQRKTVFDRHKMLS</sequence>
<dbReference type="EMBL" id="AK005248">
    <property type="protein sequence ID" value="BAB23903.1"/>
    <property type="molecule type" value="mRNA"/>
</dbReference>
<dbReference type="EMBL" id="AK021225">
    <property type="protein sequence ID" value="BAB32335.1"/>
    <property type="molecule type" value="mRNA"/>
</dbReference>
<dbReference type="EMBL" id="AK134909">
    <property type="protein sequence ID" value="BAE22335.1"/>
    <property type="molecule type" value="mRNA"/>
</dbReference>
<dbReference type="EMBL" id="AK154423">
    <property type="protein sequence ID" value="BAE32575.1"/>
    <property type="molecule type" value="mRNA"/>
</dbReference>
<dbReference type="EMBL" id="BC016524">
    <property type="protein sequence ID" value="AAH16524.1"/>
    <property type="molecule type" value="mRNA"/>
</dbReference>
<dbReference type="CCDS" id="CCDS15323.1"/>
<dbReference type="RefSeq" id="NP_001153617.1">
    <property type="nucleotide sequence ID" value="NM_001160145.1"/>
</dbReference>
<dbReference type="RefSeq" id="NP_001153618.1">
    <property type="nucleotide sequence ID" value="NM_001160146.1"/>
</dbReference>
<dbReference type="RefSeq" id="NP_079715.1">
    <property type="nucleotide sequence ID" value="NM_025439.3"/>
</dbReference>
<dbReference type="BioGRID" id="211320">
    <property type="interactions" value="1"/>
</dbReference>
<dbReference type="FunCoup" id="Q9CR23">
    <property type="interactions" value="1981"/>
</dbReference>
<dbReference type="STRING" id="10090.ENSMUSP00000065409"/>
<dbReference type="GlyConnect" id="2799">
    <property type="glycosylation" value="1 N-Linked glycan (1 site)"/>
</dbReference>
<dbReference type="GlyCosmos" id="Q9CR23">
    <property type="glycosylation" value="3 sites, 1 glycan"/>
</dbReference>
<dbReference type="GlyGen" id="Q9CR23">
    <property type="glycosylation" value="3 sites, 3 N-linked glycans (2 sites)"/>
</dbReference>
<dbReference type="iPTMnet" id="Q9CR23"/>
<dbReference type="PhosphoSitePlus" id="Q9CR23"/>
<dbReference type="SwissPalm" id="Q9CR23"/>
<dbReference type="jPOST" id="Q9CR23"/>
<dbReference type="PaxDb" id="10090-ENSMUSP00000065409"/>
<dbReference type="PeptideAtlas" id="Q9CR23"/>
<dbReference type="ProteomicsDB" id="259576"/>
<dbReference type="Pumba" id="Q9CR23"/>
<dbReference type="Antibodypedia" id="34497">
    <property type="antibodies" value="62 antibodies from 19 providers"/>
</dbReference>
<dbReference type="Ensembl" id="ENSMUST00000063719.15">
    <property type="protein sequence ID" value="ENSMUSP00000065409.9"/>
    <property type="gene ID" value="ENSMUSG00000026411.18"/>
</dbReference>
<dbReference type="Ensembl" id="ENSMUST00000117950.2">
    <property type="protein sequence ID" value="ENSMUSP00000113416.2"/>
    <property type="gene ID" value="ENSMUSG00000026411.18"/>
</dbReference>
<dbReference type="Ensembl" id="ENSMUST00000165125.8">
    <property type="protein sequence ID" value="ENSMUSP00000128185.2"/>
    <property type="gene ID" value="ENSMUSG00000026411.18"/>
</dbReference>
<dbReference type="GeneID" id="66241"/>
<dbReference type="KEGG" id="mmu:66241"/>
<dbReference type="UCSC" id="uc007cue.2">
    <property type="organism name" value="mouse"/>
</dbReference>
<dbReference type="AGR" id="MGI:1913491"/>
<dbReference type="CTD" id="252839"/>
<dbReference type="MGI" id="MGI:1913491">
    <property type="gene designation" value="Tmem9"/>
</dbReference>
<dbReference type="VEuPathDB" id="HostDB:ENSMUSG00000026411"/>
<dbReference type="eggNOG" id="KOG4007">
    <property type="taxonomic scope" value="Eukaryota"/>
</dbReference>
<dbReference type="GeneTree" id="ENSGT00390000000819"/>
<dbReference type="HOGENOM" id="CLU_093267_2_0_1"/>
<dbReference type="InParanoid" id="Q9CR23"/>
<dbReference type="OMA" id="QCTWKCA"/>
<dbReference type="OrthoDB" id="10059035at2759"/>
<dbReference type="PhylomeDB" id="Q9CR23"/>
<dbReference type="TreeFam" id="TF315146"/>
<dbReference type="BioGRID-ORCS" id="66241">
    <property type="hits" value="3 hits in 78 CRISPR screens"/>
</dbReference>
<dbReference type="ChiTaRS" id="Tmem9">
    <property type="organism name" value="mouse"/>
</dbReference>
<dbReference type="PRO" id="PR:Q9CR23"/>
<dbReference type="Proteomes" id="UP000000589">
    <property type="component" value="Chromosome 1"/>
</dbReference>
<dbReference type="RNAct" id="Q9CR23">
    <property type="molecule type" value="protein"/>
</dbReference>
<dbReference type="Bgee" id="ENSMUSG00000026411">
    <property type="expression patterns" value="Expressed in retinal neural layer and 234 other cell types or tissues"/>
</dbReference>
<dbReference type="GO" id="GO:0045171">
    <property type="term" value="C:intercellular bridge"/>
    <property type="evidence" value="ECO:0007669"/>
    <property type="project" value="Ensembl"/>
</dbReference>
<dbReference type="GO" id="GO:0005770">
    <property type="term" value="C:late endosome"/>
    <property type="evidence" value="ECO:0000250"/>
    <property type="project" value="UniProtKB"/>
</dbReference>
<dbReference type="GO" id="GO:0005765">
    <property type="term" value="C:lysosomal membrane"/>
    <property type="evidence" value="ECO:0000250"/>
    <property type="project" value="UniProtKB"/>
</dbReference>
<dbReference type="GO" id="GO:0005764">
    <property type="term" value="C:lysosome"/>
    <property type="evidence" value="ECO:0000250"/>
    <property type="project" value="UniProtKB"/>
</dbReference>
<dbReference type="GO" id="GO:0072686">
    <property type="term" value="C:mitotic spindle"/>
    <property type="evidence" value="ECO:0007669"/>
    <property type="project" value="Ensembl"/>
</dbReference>
<dbReference type="GO" id="GO:0032585">
    <property type="term" value="C:multivesicular body membrane"/>
    <property type="evidence" value="ECO:0000250"/>
    <property type="project" value="UniProtKB"/>
</dbReference>
<dbReference type="GO" id="GO:0048388">
    <property type="term" value="P:endosomal lumen acidification"/>
    <property type="evidence" value="ECO:0000250"/>
    <property type="project" value="UniProtKB"/>
</dbReference>
<dbReference type="GO" id="GO:0007042">
    <property type="term" value="P:lysosomal lumen acidification"/>
    <property type="evidence" value="ECO:0000250"/>
    <property type="project" value="UniProtKB"/>
</dbReference>
<dbReference type="GO" id="GO:0090263">
    <property type="term" value="P:positive regulation of canonical Wnt signaling pathway"/>
    <property type="evidence" value="ECO:0000315"/>
    <property type="project" value="UniProtKB"/>
</dbReference>
<dbReference type="GO" id="GO:0015031">
    <property type="term" value="P:protein transport"/>
    <property type="evidence" value="ECO:0007669"/>
    <property type="project" value="UniProtKB-KW"/>
</dbReference>
<dbReference type="GO" id="GO:0070070">
    <property type="term" value="P:proton-transporting V-type ATPase complex assembly"/>
    <property type="evidence" value="ECO:0000250"/>
    <property type="project" value="UniProtKB"/>
</dbReference>
<dbReference type="GO" id="GO:0042176">
    <property type="term" value="P:regulation of protein catabolic process"/>
    <property type="evidence" value="ECO:0000315"/>
    <property type="project" value="UniProtKB"/>
</dbReference>
<dbReference type="InterPro" id="IPR008853">
    <property type="entry name" value="TMEM9/TMEM9B"/>
</dbReference>
<dbReference type="PANTHER" id="PTHR13064:SF1">
    <property type="entry name" value="PROTON-TRANSPORTING V-TYPE ATPASE COMPLEX ASSEMBLY REGULATOR TMEM9"/>
    <property type="match status" value="1"/>
</dbReference>
<dbReference type="PANTHER" id="PTHR13064">
    <property type="entry name" value="TRANSMEMBRANE PROTEIN 9 FAMILY MEMBER"/>
    <property type="match status" value="1"/>
</dbReference>
<dbReference type="Pfam" id="PF05434">
    <property type="entry name" value="Tmemb_9"/>
    <property type="match status" value="1"/>
</dbReference>